<reference key="1">
    <citation type="journal article" date="2002" name="J. Mol. Evol.">
        <title>Rapid evolution of the male-specific antibacterial protein andropin gene in Drosophila.</title>
        <authorList>
            <person name="Date-Ito A."/>
            <person name="Kasahara K."/>
            <person name="Sawai H."/>
            <person name="Chigusa S.I."/>
        </authorList>
    </citation>
    <scope>NUCLEOTIDE SEQUENCE [GENOMIC DNA]</scope>
</reference>
<proteinExistence type="evidence at transcript level"/>
<keyword id="KW-0044">Antibiotic</keyword>
<keyword id="KW-0929">Antimicrobial</keyword>
<keyword id="KW-0391">Immunity</keyword>
<keyword id="KW-0399">Innate immunity</keyword>
<keyword id="KW-0964">Secreted</keyword>
<keyword id="KW-0732">Signal</keyword>
<dbReference type="EMBL" id="AB047044">
    <property type="protein sequence ID" value="BAB78549.1"/>
    <property type="molecule type" value="Genomic_DNA"/>
</dbReference>
<dbReference type="GO" id="GO:0005576">
    <property type="term" value="C:extracellular region"/>
    <property type="evidence" value="ECO:0000250"/>
    <property type="project" value="UniProtKB"/>
</dbReference>
<dbReference type="GO" id="GO:0050830">
    <property type="term" value="P:defense response to Gram-positive bacterium"/>
    <property type="evidence" value="ECO:0000250"/>
    <property type="project" value="UniProtKB"/>
</dbReference>
<dbReference type="GO" id="GO:0045087">
    <property type="term" value="P:innate immune response"/>
    <property type="evidence" value="ECO:0007669"/>
    <property type="project" value="UniProtKB-KW"/>
</dbReference>
<dbReference type="GO" id="GO:0006962">
    <property type="term" value="P:male-specific antibacterial humoral response"/>
    <property type="evidence" value="ECO:0000250"/>
    <property type="project" value="UniProtKB"/>
</dbReference>
<sequence>MKYFSVLVVLTLILAIVDQSDAFINLLDKVEDALHTGAQAGFKLIRPVERGATPKKSEKPEK</sequence>
<accession>Q8WSV1</accession>
<organism>
    <name type="scientific">Drosophila teissieri</name>
    <name type="common">Fruit fly</name>
    <dbReference type="NCBI Taxonomy" id="7243"/>
    <lineage>
        <taxon>Eukaryota</taxon>
        <taxon>Metazoa</taxon>
        <taxon>Ecdysozoa</taxon>
        <taxon>Arthropoda</taxon>
        <taxon>Hexapoda</taxon>
        <taxon>Insecta</taxon>
        <taxon>Pterygota</taxon>
        <taxon>Neoptera</taxon>
        <taxon>Endopterygota</taxon>
        <taxon>Diptera</taxon>
        <taxon>Brachycera</taxon>
        <taxon>Muscomorpha</taxon>
        <taxon>Ephydroidea</taxon>
        <taxon>Drosophilidae</taxon>
        <taxon>Drosophila</taxon>
        <taxon>Sophophora</taxon>
    </lineage>
</organism>
<comment type="function">
    <text>Male-specific peptide with moderate activity against Gram-positive bacteria.</text>
</comment>
<comment type="subcellular location">
    <subcellularLocation>
        <location>Secreted</location>
    </subcellularLocation>
</comment>
<comment type="tissue specificity">
    <text>Ejaculatory duct of adult males.</text>
</comment>
<comment type="induction">
    <text>In response to mating.</text>
</comment>
<comment type="similarity">
    <text evidence="2">Belongs to the andropin family.</text>
</comment>
<evidence type="ECO:0000255" key="1"/>
<evidence type="ECO:0000305" key="2"/>
<name>ANDP_DROTE</name>
<gene>
    <name type="primary">Anp</name>
</gene>
<protein>
    <recommendedName>
        <fullName>Andropin</fullName>
    </recommendedName>
</protein>
<feature type="signal peptide" evidence="1">
    <location>
        <begin position="1"/>
        <end position="22"/>
    </location>
</feature>
<feature type="chain" id="PRO_0000004956" description="Andropin">
    <location>
        <begin position="23"/>
        <end position="62"/>
    </location>
</feature>